<gene>
    <name evidence="1" type="primary">prfC</name>
    <name type="ordered locus">SAUSA300_0921</name>
</gene>
<protein>
    <recommendedName>
        <fullName evidence="1">Peptide chain release factor 3</fullName>
        <shortName evidence="1">RF-3</shortName>
    </recommendedName>
</protein>
<name>RF3_STAA3</name>
<dbReference type="EMBL" id="CP000255">
    <property type="protein sequence ID" value="ABD22277.1"/>
    <property type="molecule type" value="Genomic_DNA"/>
</dbReference>
<dbReference type="RefSeq" id="WP_001049959.1">
    <property type="nucleotide sequence ID" value="NZ_CP027476.1"/>
</dbReference>
<dbReference type="SMR" id="Q2FI57"/>
<dbReference type="KEGG" id="saa:SAUSA300_0921"/>
<dbReference type="HOGENOM" id="CLU_002794_2_1_9"/>
<dbReference type="OMA" id="GFVFKIH"/>
<dbReference type="Proteomes" id="UP000001939">
    <property type="component" value="Chromosome"/>
</dbReference>
<dbReference type="GO" id="GO:0005829">
    <property type="term" value="C:cytosol"/>
    <property type="evidence" value="ECO:0007669"/>
    <property type="project" value="TreeGrafter"/>
</dbReference>
<dbReference type="GO" id="GO:0005525">
    <property type="term" value="F:GTP binding"/>
    <property type="evidence" value="ECO:0007669"/>
    <property type="project" value="UniProtKB-UniRule"/>
</dbReference>
<dbReference type="GO" id="GO:0003924">
    <property type="term" value="F:GTPase activity"/>
    <property type="evidence" value="ECO:0007669"/>
    <property type="project" value="InterPro"/>
</dbReference>
<dbReference type="GO" id="GO:0016150">
    <property type="term" value="F:translation release factor activity, codon nonspecific"/>
    <property type="evidence" value="ECO:0007669"/>
    <property type="project" value="TreeGrafter"/>
</dbReference>
<dbReference type="GO" id="GO:0016149">
    <property type="term" value="F:translation release factor activity, codon specific"/>
    <property type="evidence" value="ECO:0007669"/>
    <property type="project" value="UniProtKB-UniRule"/>
</dbReference>
<dbReference type="GO" id="GO:0006449">
    <property type="term" value="P:regulation of translational termination"/>
    <property type="evidence" value="ECO:0007669"/>
    <property type="project" value="UniProtKB-UniRule"/>
</dbReference>
<dbReference type="CDD" id="cd04169">
    <property type="entry name" value="RF3"/>
    <property type="match status" value="1"/>
</dbReference>
<dbReference type="CDD" id="cd16259">
    <property type="entry name" value="RF3_III"/>
    <property type="match status" value="1"/>
</dbReference>
<dbReference type="FunFam" id="2.40.30.10:FF:000040">
    <property type="entry name" value="Peptide chain release factor 3"/>
    <property type="match status" value="1"/>
</dbReference>
<dbReference type="FunFam" id="3.30.70.3280:FF:000001">
    <property type="entry name" value="Peptide chain release factor 3"/>
    <property type="match status" value="1"/>
</dbReference>
<dbReference type="FunFam" id="3.40.50.300:FF:000542">
    <property type="entry name" value="Peptide chain release factor 3"/>
    <property type="match status" value="1"/>
</dbReference>
<dbReference type="Gene3D" id="3.40.50.300">
    <property type="entry name" value="P-loop containing nucleotide triphosphate hydrolases"/>
    <property type="match status" value="1"/>
</dbReference>
<dbReference type="Gene3D" id="3.30.70.3280">
    <property type="entry name" value="Peptide chain release factor 3, domain III"/>
    <property type="match status" value="1"/>
</dbReference>
<dbReference type="Gene3D" id="2.40.30.10">
    <property type="entry name" value="Translation factors"/>
    <property type="match status" value="1"/>
</dbReference>
<dbReference type="HAMAP" id="MF_00072">
    <property type="entry name" value="Rel_fac_3"/>
    <property type="match status" value="1"/>
</dbReference>
<dbReference type="InterPro" id="IPR053905">
    <property type="entry name" value="EF-G-like_DII"/>
</dbReference>
<dbReference type="InterPro" id="IPR035647">
    <property type="entry name" value="EFG_III/V"/>
</dbReference>
<dbReference type="InterPro" id="IPR031157">
    <property type="entry name" value="G_TR_CS"/>
</dbReference>
<dbReference type="InterPro" id="IPR027417">
    <property type="entry name" value="P-loop_NTPase"/>
</dbReference>
<dbReference type="InterPro" id="IPR004548">
    <property type="entry name" value="PrfC"/>
</dbReference>
<dbReference type="InterPro" id="IPR032090">
    <property type="entry name" value="RF3_C"/>
</dbReference>
<dbReference type="InterPro" id="IPR038467">
    <property type="entry name" value="RF3_dom_3_sf"/>
</dbReference>
<dbReference type="InterPro" id="IPR041732">
    <property type="entry name" value="RF3_GTP-bd"/>
</dbReference>
<dbReference type="InterPro" id="IPR005225">
    <property type="entry name" value="Small_GTP-bd"/>
</dbReference>
<dbReference type="InterPro" id="IPR000795">
    <property type="entry name" value="T_Tr_GTP-bd_dom"/>
</dbReference>
<dbReference type="InterPro" id="IPR009000">
    <property type="entry name" value="Transl_B-barrel_sf"/>
</dbReference>
<dbReference type="NCBIfam" id="TIGR00503">
    <property type="entry name" value="prfC"/>
    <property type="match status" value="1"/>
</dbReference>
<dbReference type="NCBIfam" id="NF001964">
    <property type="entry name" value="PRK00741.1"/>
    <property type="match status" value="1"/>
</dbReference>
<dbReference type="NCBIfam" id="TIGR00231">
    <property type="entry name" value="small_GTP"/>
    <property type="match status" value="1"/>
</dbReference>
<dbReference type="PANTHER" id="PTHR43556">
    <property type="entry name" value="PEPTIDE CHAIN RELEASE FACTOR RF3"/>
    <property type="match status" value="1"/>
</dbReference>
<dbReference type="PANTHER" id="PTHR43556:SF2">
    <property type="entry name" value="PEPTIDE CHAIN RELEASE FACTOR RF3"/>
    <property type="match status" value="1"/>
</dbReference>
<dbReference type="Pfam" id="PF22042">
    <property type="entry name" value="EF-G_D2"/>
    <property type="match status" value="1"/>
</dbReference>
<dbReference type="Pfam" id="PF00009">
    <property type="entry name" value="GTP_EFTU"/>
    <property type="match status" value="1"/>
</dbReference>
<dbReference type="Pfam" id="PF16658">
    <property type="entry name" value="RF3_C"/>
    <property type="match status" value="1"/>
</dbReference>
<dbReference type="PRINTS" id="PR00315">
    <property type="entry name" value="ELONGATNFCT"/>
</dbReference>
<dbReference type="SUPFAM" id="SSF54980">
    <property type="entry name" value="EF-G C-terminal domain-like"/>
    <property type="match status" value="1"/>
</dbReference>
<dbReference type="SUPFAM" id="SSF52540">
    <property type="entry name" value="P-loop containing nucleoside triphosphate hydrolases"/>
    <property type="match status" value="1"/>
</dbReference>
<dbReference type="SUPFAM" id="SSF50447">
    <property type="entry name" value="Translation proteins"/>
    <property type="match status" value="1"/>
</dbReference>
<dbReference type="PROSITE" id="PS00301">
    <property type="entry name" value="G_TR_1"/>
    <property type="match status" value="1"/>
</dbReference>
<dbReference type="PROSITE" id="PS51722">
    <property type="entry name" value="G_TR_2"/>
    <property type="match status" value="1"/>
</dbReference>
<sequence length="520" mass="59602">MNLKQEVESRKTFAIISHPDAGKTTLTEKLLYFSGAIREAGTVKGKKTGKFATSDWMKVEQERGISVTSSVMQFDYDDYKINILDTPGHEDFSEDTYRTLMAVDSAVMVIDCAKGIEPQTLKLFKVCKMRGIPIFTFINKLDRVGKEPFELLDEIEETLNIETYPMNWPIGMGQSFFGIIDRKSKTIEPFRDEENILHLNDDFELEEDHAITNDSDFEQAIEELMLVEEAGEAFDNDALLSGDLTPVFFGSALANFGVQNFLNAYVDFAPMPNARQTKEDVEVSPFDDSFSGFIFKIQANMDPKHRDRIAFMRVVSGAFERGMDVTLQRTNKKQKITRSTSFMADDKETVNHAVAGDIIGLYDTGNYQIGDTLVGGKQTYSFQDLPQFTPEIFMKVSAKNVMKQKHFHKGIEQLVQEGAIQYYKTLHTNQIILGAVGQLQFEVFEHRMKNEYNVDVVMEPVGRKIARWIENEDQITDKMNTSRSILVKDRYDDLVFLFENEFATRWFEEKFPEIKLYSLL</sequence>
<reference key="1">
    <citation type="journal article" date="2006" name="Lancet">
        <title>Complete genome sequence of USA300, an epidemic clone of community-acquired meticillin-resistant Staphylococcus aureus.</title>
        <authorList>
            <person name="Diep B.A."/>
            <person name="Gill S.R."/>
            <person name="Chang R.F."/>
            <person name="Phan T.H."/>
            <person name="Chen J.H."/>
            <person name="Davidson M.G."/>
            <person name="Lin F."/>
            <person name="Lin J."/>
            <person name="Carleton H.A."/>
            <person name="Mongodin E.F."/>
            <person name="Sensabaugh G.F."/>
            <person name="Perdreau-Remington F."/>
        </authorList>
    </citation>
    <scope>NUCLEOTIDE SEQUENCE [LARGE SCALE GENOMIC DNA]</scope>
    <source>
        <strain>USA300</strain>
    </source>
</reference>
<feature type="chain" id="PRO_0000242212" description="Peptide chain release factor 3">
    <location>
        <begin position="1"/>
        <end position="520"/>
    </location>
</feature>
<feature type="domain" description="tr-type G">
    <location>
        <begin position="8"/>
        <end position="277"/>
    </location>
</feature>
<feature type="binding site" evidence="1">
    <location>
        <begin position="17"/>
        <end position="24"/>
    </location>
    <ligand>
        <name>GTP</name>
        <dbReference type="ChEBI" id="CHEBI:37565"/>
    </ligand>
</feature>
<feature type="binding site" evidence="1">
    <location>
        <begin position="85"/>
        <end position="89"/>
    </location>
    <ligand>
        <name>GTP</name>
        <dbReference type="ChEBI" id="CHEBI:37565"/>
    </ligand>
</feature>
<feature type="binding site" evidence="1">
    <location>
        <begin position="139"/>
        <end position="142"/>
    </location>
    <ligand>
        <name>GTP</name>
        <dbReference type="ChEBI" id="CHEBI:37565"/>
    </ligand>
</feature>
<keyword id="KW-0963">Cytoplasm</keyword>
<keyword id="KW-0342">GTP-binding</keyword>
<keyword id="KW-0547">Nucleotide-binding</keyword>
<keyword id="KW-0648">Protein biosynthesis</keyword>
<organism>
    <name type="scientific">Staphylococcus aureus (strain USA300)</name>
    <dbReference type="NCBI Taxonomy" id="367830"/>
    <lineage>
        <taxon>Bacteria</taxon>
        <taxon>Bacillati</taxon>
        <taxon>Bacillota</taxon>
        <taxon>Bacilli</taxon>
        <taxon>Bacillales</taxon>
        <taxon>Staphylococcaceae</taxon>
        <taxon>Staphylococcus</taxon>
    </lineage>
</organism>
<comment type="function">
    <text evidence="1">Increases the formation of ribosomal termination complexes and stimulates activities of RF-1 and RF-2. It binds guanine nucleotides and has strong preference for UGA stop codons. It may interact directly with the ribosome. The stimulation of RF-1 and RF-2 is significantly reduced by GTP and GDP, but not by GMP.</text>
</comment>
<comment type="subcellular location">
    <subcellularLocation>
        <location evidence="1">Cytoplasm</location>
    </subcellularLocation>
</comment>
<comment type="similarity">
    <text evidence="1">Belongs to the TRAFAC class translation factor GTPase superfamily. Classic translation factor GTPase family. PrfC subfamily.</text>
</comment>
<proteinExistence type="inferred from homology"/>
<evidence type="ECO:0000255" key="1">
    <source>
        <dbReference type="HAMAP-Rule" id="MF_00072"/>
    </source>
</evidence>
<accession>Q2FI57</accession>